<name>RFBG_SALTY</name>
<feature type="chain" id="PRO_0000097294" description="CDP-glucose 4,6-dehydratase">
    <location>
        <begin position="1"/>
        <end position="359"/>
    </location>
</feature>
<feature type="helix" evidence="2">
    <location>
        <begin position="4"/>
        <end position="7"/>
    </location>
</feature>
<feature type="strand" evidence="2">
    <location>
        <begin position="11"/>
        <end position="15"/>
    </location>
</feature>
<feature type="turn" evidence="2">
    <location>
        <begin position="16"/>
        <end position="18"/>
    </location>
</feature>
<feature type="helix" evidence="2">
    <location>
        <begin position="20"/>
        <end position="31"/>
    </location>
</feature>
<feature type="strand" evidence="2">
    <location>
        <begin position="35"/>
        <end position="42"/>
    </location>
</feature>
<feature type="strand" evidence="2">
    <location>
        <begin position="44"/>
        <end position="47"/>
    </location>
</feature>
<feature type="helix" evidence="2">
    <location>
        <begin position="49"/>
        <end position="52"/>
    </location>
</feature>
<feature type="helix" evidence="2">
    <location>
        <begin position="55"/>
        <end position="57"/>
    </location>
</feature>
<feature type="strand" evidence="2">
    <location>
        <begin position="59"/>
        <end position="63"/>
    </location>
</feature>
<feature type="helix" evidence="2">
    <location>
        <begin position="69"/>
        <end position="79"/>
    </location>
</feature>
<feature type="strand" evidence="2">
    <location>
        <begin position="82"/>
        <end position="86"/>
    </location>
</feature>
<feature type="helix" evidence="2">
    <location>
        <begin position="93"/>
        <end position="98"/>
    </location>
</feature>
<feature type="helix" evidence="2">
    <location>
        <begin position="100"/>
        <end position="121"/>
    </location>
</feature>
<feature type="strand" evidence="2">
    <location>
        <begin position="126"/>
        <end position="130"/>
    </location>
</feature>
<feature type="helix" evidence="2">
    <location>
        <begin position="133"/>
        <end position="135"/>
    </location>
</feature>
<feature type="strand" evidence="2">
    <location>
        <begin position="141"/>
        <end position="143"/>
    </location>
</feature>
<feature type="helix" evidence="2">
    <location>
        <begin position="156"/>
        <end position="175"/>
    </location>
</feature>
<feature type="helix" evidence="2">
    <location>
        <begin position="178"/>
        <end position="180"/>
    </location>
</feature>
<feature type="helix" evidence="2">
    <location>
        <begin position="181"/>
        <end position="184"/>
    </location>
</feature>
<feature type="strand" evidence="2">
    <location>
        <begin position="187"/>
        <end position="193"/>
    </location>
</feature>
<feature type="strand" evidence="2">
    <location>
        <begin position="195"/>
        <end position="197"/>
    </location>
</feature>
<feature type="helix" evidence="2">
    <location>
        <begin position="207"/>
        <end position="216"/>
    </location>
</feature>
<feature type="strand" evidence="2">
    <location>
        <begin position="221"/>
        <end position="224"/>
    </location>
</feature>
<feature type="strand" evidence="2">
    <location>
        <begin position="232"/>
        <end position="234"/>
    </location>
</feature>
<feature type="helix" evidence="2">
    <location>
        <begin position="236"/>
        <end position="251"/>
    </location>
</feature>
<feature type="helix" evidence="2">
    <location>
        <begin position="253"/>
        <end position="256"/>
    </location>
</feature>
<feature type="strand" evidence="2">
    <location>
        <begin position="258"/>
        <end position="262"/>
    </location>
</feature>
<feature type="helix" evidence="2">
    <location>
        <begin position="266"/>
        <end position="268"/>
    </location>
</feature>
<feature type="helix" evidence="2">
    <location>
        <begin position="272"/>
        <end position="283"/>
    </location>
</feature>
<feature type="strand" evidence="2">
    <location>
        <begin position="289"/>
        <end position="291"/>
    </location>
</feature>
<feature type="helix" evidence="2">
    <location>
        <begin position="308"/>
        <end position="313"/>
    </location>
</feature>
<feature type="helix" evidence="2">
    <location>
        <begin position="322"/>
        <end position="337"/>
    </location>
</feature>
<feature type="helix" evidence="2">
    <location>
        <begin position="342"/>
        <end position="355"/>
    </location>
</feature>
<keyword id="KW-0002">3D-structure</keyword>
<keyword id="KW-0448">Lipopolysaccharide biosynthesis</keyword>
<keyword id="KW-0456">Lyase</keyword>
<keyword id="KW-0520">NAD</keyword>
<keyword id="KW-1185">Reference proteome</keyword>
<protein>
    <recommendedName>
        <fullName>CDP-glucose 4,6-dehydratase</fullName>
        <ecNumber>4.2.1.45</ecNumber>
    </recommendedName>
</protein>
<reference key="1">
    <citation type="journal article" date="1991" name="Mol. Microbiol.">
        <title>Structure and sequence of the rfb (O antigen) gene cluster of Salmonella serovar typhimurium (strain LT2).</title>
        <authorList>
            <person name="Jiang X.-M."/>
            <person name="Neal B."/>
            <person name="Santiago F."/>
            <person name="Lee S.J."/>
            <person name="Romana L.K."/>
            <person name="Reeves P.R."/>
        </authorList>
    </citation>
    <scope>NUCLEOTIDE SEQUENCE [GENOMIC DNA]</scope>
    <source>
        <strain>LT2</strain>
    </source>
</reference>
<reference key="2">
    <citation type="journal article" date="2001" name="Nature">
        <title>Complete genome sequence of Salmonella enterica serovar Typhimurium LT2.</title>
        <authorList>
            <person name="McClelland M."/>
            <person name="Sanderson K.E."/>
            <person name="Spieth J."/>
            <person name="Clifton S.W."/>
            <person name="Latreille P."/>
            <person name="Courtney L."/>
            <person name="Porwollik S."/>
            <person name="Ali J."/>
            <person name="Dante M."/>
            <person name="Du F."/>
            <person name="Hou S."/>
            <person name="Layman D."/>
            <person name="Leonard S."/>
            <person name="Nguyen C."/>
            <person name="Scott K."/>
            <person name="Holmes A."/>
            <person name="Grewal N."/>
            <person name="Mulvaney E."/>
            <person name="Ryan E."/>
            <person name="Sun H."/>
            <person name="Florea L."/>
            <person name="Miller W."/>
            <person name="Stoneking T."/>
            <person name="Nhan M."/>
            <person name="Waterston R."/>
            <person name="Wilson R.K."/>
        </authorList>
    </citation>
    <scope>NUCLEOTIDE SEQUENCE [LARGE SCALE GENOMIC DNA]</scope>
    <source>
        <strain>LT2 / SGSC1412 / ATCC 700720</strain>
    </source>
</reference>
<comment type="catalytic activity">
    <reaction>
        <text>CDP-D-glucose = CDP-4-dehydro-6-deoxy-D-glucose + H2O</text>
        <dbReference type="Rhea" id="RHEA:17153"/>
        <dbReference type="ChEBI" id="CHEBI:15377"/>
        <dbReference type="ChEBI" id="CHEBI:58166"/>
        <dbReference type="ChEBI" id="CHEBI:58660"/>
        <dbReference type="EC" id="4.2.1.45"/>
    </reaction>
</comment>
<comment type="cofactor">
    <cofactor>
        <name>NAD(+)</name>
        <dbReference type="ChEBI" id="CHEBI:57540"/>
    </cofactor>
</comment>
<comment type="pathway">
    <text>Nucleotide-sugar biosynthesis; CDP-3,6-dideoxy-D-mannose biosynthesis; CDP-3,6-dideoxy-D-mannose from CTP and alpha-D-glucose 1-phosphate: step 2/5.</text>
</comment>
<comment type="pathway">
    <text>Bacterial outer membrane biogenesis; LPS O-antigen biosynthesis.</text>
</comment>
<comment type="similarity">
    <text evidence="1">Belongs to the NAD(P)-dependent epimerase/dehydratase family.</text>
</comment>
<evidence type="ECO:0000305" key="1"/>
<evidence type="ECO:0007829" key="2">
    <source>
        <dbReference type="PDB" id="1WVG"/>
    </source>
</evidence>
<gene>
    <name type="primary">rfbG</name>
    <name type="ordered locus">STM2091</name>
</gene>
<accession>P26397</accession>
<sequence length="359" mass="41022">MIDKNFWQGKRVFVTGHTGFKGSWLSLWLTEMGAIVKGYALDAPTVPSLFEIVRLNDLMESHIGDIRDFEKLRNSIAEFKPEIVFHMAAQPLVRLSYEQPIETYSTNVMGTVHLLETVKQVGNIKAVVNITSDKCYDNREWVWGYRENEPMGGYDPYSNSKGCAELVASAFRNSFFNPANYEQHGVGLASVRAGNVIGGGDWAKDRLIPDILRSFENNQQVIIRNPYSIRPWQHVLEPLSGYIVVAQRLYTEGAKFSEGWNFGPRDEDAKTVEFIVDKMVTLWGDDASWLLDGENHPHEAHYLKLDCSKANMQLGWHPRWGLTETLGRIVKWHKAWIRGEDMLICSKREISDYMSATTR</sequence>
<dbReference type="EC" id="4.2.1.45"/>
<dbReference type="EMBL" id="X56793">
    <property type="protein sequence ID" value="CAA40121.1"/>
    <property type="molecule type" value="Genomic_DNA"/>
</dbReference>
<dbReference type="EMBL" id="AE006468">
    <property type="protein sequence ID" value="AAL20995.1"/>
    <property type="molecule type" value="Genomic_DNA"/>
</dbReference>
<dbReference type="PIR" id="S15305">
    <property type="entry name" value="S15305"/>
</dbReference>
<dbReference type="RefSeq" id="NP_461036.1">
    <property type="nucleotide sequence ID" value="NC_003197.2"/>
</dbReference>
<dbReference type="RefSeq" id="WP_000565905.1">
    <property type="nucleotide sequence ID" value="NC_003197.2"/>
</dbReference>
<dbReference type="PDB" id="1WVG">
    <property type="method" value="X-ray"/>
    <property type="resolution" value="1.80 A"/>
    <property type="chains" value="A/B=2-359"/>
</dbReference>
<dbReference type="PDBsum" id="1WVG"/>
<dbReference type="SMR" id="P26397"/>
<dbReference type="STRING" id="99287.STM2091"/>
<dbReference type="DrugBank" id="DB02059">
    <property type="generic name" value="Adenosine-5-Diphosphoribose"/>
</dbReference>
<dbReference type="DrugBank" id="DB03069">
    <property type="generic name" value="Cytidine-5'-diphospho-beta-D-xylose"/>
</dbReference>
<dbReference type="PaxDb" id="99287-STM2091"/>
<dbReference type="GeneID" id="1253612"/>
<dbReference type="KEGG" id="stm:STM2091"/>
<dbReference type="PATRIC" id="fig|99287.12.peg.2213"/>
<dbReference type="HOGENOM" id="CLU_007383_1_7_6"/>
<dbReference type="OMA" id="CYENREW"/>
<dbReference type="PhylomeDB" id="P26397"/>
<dbReference type="BioCyc" id="SENT99287:STM2091-MONOMER"/>
<dbReference type="UniPathway" id="UPA00055">
    <property type="reaction ID" value="UER00512"/>
</dbReference>
<dbReference type="UniPathway" id="UPA00281"/>
<dbReference type="EvolutionaryTrace" id="P26397"/>
<dbReference type="Proteomes" id="UP000001014">
    <property type="component" value="Chromosome"/>
</dbReference>
<dbReference type="GO" id="GO:0047733">
    <property type="term" value="F:CDP-glucose 4,6-dehydratase activity"/>
    <property type="evidence" value="ECO:0007669"/>
    <property type="project" value="UniProtKB-EC"/>
</dbReference>
<dbReference type="GO" id="GO:0009243">
    <property type="term" value="P:O antigen biosynthetic process"/>
    <property type="evidence" value="ECO:0007669"/>
    <property type="project" value="UniProtKB-UniPathway"/>
</dbReference>
<dbReference type="CDD" id="cd05252">
    <property type="entry name" value="CDP_GD_SDR_e"/>
    <property type="match status" value="1"/>
</dbReference>
<dbReference type="Gene3D" id="3.40.50.720">
    <property type="entry name" value="NAD(P)-binding Rossmann-like Domain"/>
    <property type="match status" value="1"/>
</dbReference>
<dbReference type="Gene3D" id="3.90.25.10">
    <property type="entry name" value="UDP-galactose 4-epimerase, domain 1"/>
    <property type="match status" value="1"/>
</dbReference>
<dbReference type="InterPro" id="IPR013445">
    <property type="entry name" value="CDP_4_6_deHydtase"/>
</dbReference>
<dbReference type="InterPro" id="IPR016040">
    <property type="entry name" value="NAD(P)-bd_dom"/>
</dbReference>
<dbReference type="InterPro" id="IPR036291">
    <property type="entry name" value="NAD(P)-bd_dom_sf"/>
</dbReference>
<dbReference type="NCBIfam" id="TIGR02622">
    <property type="entry name" value="CDP_4_6_dhtase"/>
    <property type="match status" value="1"/>
</dbReference>
<dbReference type="PANTHER" id="PTHR43000">
    <property type="entry name" value="DTDP-D-GLUCOSE 4,6-DEHYDRATASE-RELATED"/>
    <property type="match status" value="1"/>
</dbReference>
<dbReference type="Pfam" id="PF16363">
    <property type="entry name" value="GDP_Man_Dehyd"/>
    <property type="match status" value="1"/>
</dbReference>
<dbReference type="SUPFAM" id="SSF51735">
    <property type="entry name" value="NAD(P)-binding Rossmann-fold domains"/>
    <property type="match status" value="1"/>
</dbReference>
<proteinExistence type="evidence at protein level"/>
<organism>
    <name type="scientific">Salmonella typhimurium (strain LT2 / SGSC1412 / ATCC 700720)</name>
    <dbReference type="NCBI Taxonomy" id="99287"/>
    <lineage>
        <taxon>Bacteria</taxon>
        <taxon>Pseudomonadati</taxon>
        <taxon>Pseudomonadota</taxon>
        <taxon>Gammaproteobacteria</taxon>
        <taxon>Enterobacterales</taxon>
        <taxon>Enterobacteriaceae</taxon>
        <taxon>Salmonella</taxon>
    </lineage>
</organism>